<comment type="function">
    <text evidence="1">Transferase that catalyzes the transfer of sulfur from thiosulfate to thiophilic acceptors such as cyanide or dithiols. May function in a CysM-independent thiosulfate assimilation pathway by catalyzing the conversion of thiosulfate to sulfite, which can then be used for L-cysteine biosynthesis.</text>
</comment>
<comment type="catalytic activity">
    <reaction evidence="1">
        <text>thiosulfate + hydrogen cyanide = thiocyanate + sulfite + 2 H(+)</text>
        <dbReference type="Rhea" id="RHEA:16881"/>
        <dbReference type="ChEBI" id="CHEBI:15378"/>
        <dbReference type="ChEBI" id="CHEBI:17359"/>
        <dbReference type="ChEBI" id="CHEBI:18022"/>
        <dbReference type="ChEBI" id="CHEBI:18407"/>
        <dbReference type="ChEBI" id="CHEBI:33542"/>
        <dbReference type="EC" id="2.8.1.1"/>
    </reaction>
</comment>
<comment type="catalytic activity">
    <reaction evidence="1">
        <text>thiosulfate + [thioredoxin]-dithiol = [thioredoxin]-disulfide + hydrogen sulfide + sulfite + 2 H(+)</text>
        <dbReference type="Rhea" id="RHEA:83859"/>
        <dbReference type="Rhea" id="RHEA-COMP:10698"/>
        <dbReference type="Rhea" id="RHEA-COMP:10700"/>
        <dbReference type="ChEBI" id="CHEBI:15378"/>
        <dbReference type="ChEBI" id="CHEBI:17359"/>
        <dbReference type="ChEBI" id="CHEBI:29919"/>
        <dbReference type="ChEBI" id="CHEBI:29950"/>
        <dbReference type="ChEBI" id="CHEBI:33542"/>
        <dbReference type="ChEBI" id="CHEBI:50058"/>
    </reaction>
</comment>
<comment type="subcellular location">
    <subcellularLocation>
        <location evidence="1">Cytoplasm</location>
    </subcellularLocation>
</comment>
<comment type="similarity">
    <text evidence="1">Belongs to the GlpE family.</text>
</comment>
<gene>
    <name evidence="1" type="primary">glpE</name>
    <name type="ordered locus">CbuK_1251</name>
</gene>
<evidence type="ECO:0000255" key="1">
    <source>
        <dbReference type="HAMAP-Rule" id="MF_01009"/>
    </source>
</evidence>
<accession>B6J836</accession>
<proteinExistence type="inferred from homology"/>
<protein>
    <recommendedName>
        <fullName evidence="1">Thiosulfate sulfurtransferase GlpE</fullName>
        <ecNumber evidence="1">2.8.1.1</ecNumber>
    </recommendedName>
</protein>
<sequence length="107" mass="12362">MMYKQISHLEAWELVKKRDIVIADVRDQDSYEEEHIANALHLSMAKLQEYSEKADKEKPVLVYCYHGISSQSVAQHLVEQGFKEVYSLIGGFETWKAHHPTSDANKN</sequence>
<organism>
    <name type="scientific">Coxiella burnetii (strain CbuK_Q154)</name>
    <name type="common">Coxiella burnetii (strain Q154)</name>
    <dbReference type="NCBI Taxonomy" id="434924"/>
    <lineage>
        <taxon>Bacteria</taxon>
        <taxon>Pseudomonadati</taxon>
        <taxon>Pseudomonadota</taxon>
        <taxon>Gammaproteobacteria</taxon>
        <taxon>Legionellales</taxon>
        <taxon>Coxiellaceae</taxon>
        <taxon>Coxiella</taxon>
    </lineage>
</organism>
<feature type="chain" id="PRO_1000134846" description="Thiosulfate sulfurtransferase GlpE">
    <location>
        <begin position="1"/>
        <end position="107"/>
    </location>
</feature>
<feature type="domain" description="Rhodanese" evidence="1">
    <location>
        <begin position="16"/>
        <end position="104"/>
    </location>
</feature>
<feature type="active site" description="Cysteine persulfide intermediate" evidence="1">
    <location>
        <position position="64"/>
    </location>
</feature>
<dbReference type="EC" id="2.8.1.1" evidence="1"/>
<dbReference type="EMBL" id="CP001020">
    <property type="protein sequence ID" value="ACJ20435.1"/>
    <property type="molecule type" value="Genomic_DNA"/>
</dbReference>
<dbReference type="RefSeq" id="WP_010957677.1">
    <property type="nucleotide sequence ID" value="NC_011528.1"/>
</dbReference>
<dbReference type="SMR" id="B6J836"/>
<dbReference type="KEGG" id="cbc:CbuK_1251"/>
<dbReference type="HOGENOM" id="CLU_089574_14_0_6"/>
<dbReference type="GO" id="GO:0005737">
    <property type="term" value="C:cytoplasm"/>
    <property type="evidence" value="ECO:0007669"/>
    <property type="project" value="UniProtKB-SubCell"/>
</dbReference>
<dbReference type="GO" id="GO:0004792">
    <property type="term" value="F:thiosulfate-cyanide sulfurtransferase activity"/>
    <property type="evidence" value="ECO:0007669"/>
    <property type="project" value="UniProtKB-UniRule"/>
</dbReference>
<dbReference type="GO" id="GO:0006071">
    <property type="term" value="P:glycerol metabolic process"/>
    <property type="evidence" value="ECO:0007669"/>
    <property type="project" value="UniProtKB-UniRule"/>
</dbReference>
<dbReference type="CDD" id="cd01444">
    <property type="entry name" value="GlpE_ST"/>
    <property type="match status" value="1"/>
</dbReference>
<dbReference type="Gene3D" id="3.40.250.10">
    <property type="entry name" value="Rhodanese-like domain"/>
    <property type="match status" value="1"/>
</dbReference>
<dbReference type="HAMAP" id="MF_01009">
    <property type="entry name" value="Thiosulf_sulfurtr"/>
    <property type="match status" value="1"/>
</dbReference>
<dbReference type="InterPro" id="IPR050229">
    <property type="entry name" value="GlpE_sulfurtransferase"/>
</dbReference>
<dbReference type="InterPro" id="IPR001763">
    <property type="entry name" value="Rhodanese-like_dom"/>
</dbReference>
<dbReference type="InterPro" id="IPR036873">
    <property type="entry name" value="Rhodanese-like_dom_sf"/>
</dbReference>
<dbReference type="InterPro" id="IPR023695">
    <property type="entry name" value="Thiosulf_sulfurTrfase"/>
</dbReference>
<dbReference type="NCBIfam" id="NF001195">
    <property type="entry name" value="PRK00162.1"/>
    <property type="match status" value="1"/>
</dbReference>
<dbReference type="PANTHER" id="PTHR43031">
    <property type="entry name" value="FAD-DEPENDENT OXIDOREDUCTASE"/>
    <property type="match status" value="1"/>
</dbReference>
<dbReference type="PANTHER" id="PTHR43031:SF6">
    <property type="entry name" value="THIOSULFATE SULFURTRANSFERASE GLPE"/>
    <property type="match status" value="1"/>
</dbReference>
<dbReference type="Pfam" id="PF00581">
    <property type="entry name" value="Rhodanese"/>
    <property type="match status" value="1"/>
</dbReference>
<dbReference type="SMART" id="SM00450">
    <property type="entry name" value="RHOD"/>
    <property type="match status" value="1"/>
</dbReference>
<dbReference type="SUPFAM" id="SSF52821">
    <property type="entry name" value="Rhodanese/Cell cycle control phosphatase"/>
    <property type="match status" value="1"/>
</dbReference>
<dbReference type="PROSITE" id="PS50206">
    <property type="entry name" value="RHODANESE_3"/>
    <property type="match status" value="1"/>
</dbReference>
<keyword id="KW-0963">Cytoplasm</keyword>
<keyword id="KW-0808">Transferase</keyword>
<name>GLPE_COXB1</name>
<reference key="1">
    <citation type="journal article" date="2009" name="Infect. Immun.">
        <title>Comparative genomics reveal extensive transposon-mediated genomic plasticity and diversity among potential effector proteins within the genus Coxiella.</title>
        <authorList>
            <person name="Beare P.A."/>
            <person name="Unsworth N."/>
            <person name="Andoh M."/>
            <person name="Voth D.E."/>
            <person name="Omsland A."/>
            <person name="Gilk S.D."/>
            <person name="Williams K.P."/>
            <person name="Sobral B.W."/>
            <person name="Kupko J.J. III"/>
            <person name="Porcella S.F."/>
            <person name="Samuel J.E."/>
            <person name="Heinzen R.A."/>
        </authorList>
    </citation>
    <scope>NUCLEOTIDE SEQUENCE [LARGE SCALE GENOMIC DNA]</scope>
    <source>
        <strain>CbuK_Q154</strain>
    </source>
</reference>